<name>HEM3_PEA</name>
<keyword id="KW-0149">Chlorophyll biosynthesis</keyword>
<keyword id="KW-0150">Chloroplast</keyword>
<keyword id="KW-0903">Direct protein sequencing</keyword>
<keyword id="KW-0934">Plastid</keyword>
<keyword id="KW-0627">Porphyrin biosynthesis</keyword>
<keyword id="KW-0808">Transferase</keyword>
<keyword id="KW-0809">Transit peptide</keyword>
<accession>Q43082</accession>
<comment type="function">
    <text>Tetrapolymerization of the monopyrrole PBG into the hydroxymethylbilane pre-uroporphyrinogen in several discrete steps.</text>
</comment>
<comment type="catalytic activity">
    <reaction>
        <text>4 porphobilinogen + H2O = hydroxymethylbilane + 4 NH4(+)</text>
        <dbReference type="Rhea" id="RHEA:13185"/>
        <dbReference type="ChEBI" id="CHEBI:15377"/>
        <dbReference type="ChEBI" id="CHEBI:28938"/>
        <dbReference type="ChEBI" id="CHEBI:57845"/>
        <dbReference type="ChEBI" id="CHEBI:58126"/>
        <dbReference type="EC" id="2.5.1.61"/>
    </reaction>
</comment>
<comment type="cofactor">
    <cofactor>
        <name>dipyrromethane</name>
        <dbReference type="ChEBI" id="CHEBI:60342"/>
    </cofactor>
    <text>Binds 1 dipyrromethane group covalently.</text>
</comment>
<comment type="pathway">
    <text>Porphyrin-containing compound metabolism; protoporphyrin-IX biosynthesis; coproporphyrinogen-III from 5-aminolevulinate: step 2/4.</text>
</comment>
<comment type="pathway">
    <text>Porphyrin-containing compound metabolism; chlorophyll biosynthesis.</text>
</comment>
<comment type="subcellular location">
    <subcellularLocation>
        <location>Plastid</location>
        <location>Chloroplast</location>
    </subcellularLocation>
</comment>
<comment type="miscellaneous">
    <text evidence="1">The porphobilinogen subunits are added to the dipyrromethane group.</text>
</comment>
<comment type="similarity">
    <text evidence="2">Belongs to the HMBS family.</text>
</comment>
<dbReference type="EC" id="2.5.1.61"/>
<dbReference type="EMBL" id="X73418">
    <property type="protein sequence ID" value="CAA51820.1"/>
    <property type="molecule type" value="mRNA"/>
</dbReference>
<dbReference type="PIR" id="S35873">
    <property type="entry name" value="JQ2278"/>
</dbReference>
<dbReference type="SMR" id="Q43082"/>
<dbReference type="OrthoDB" id="564646at2759"/>
<dbReference type="UniPathway" id="UPA00251">
    <property type="reaction ID" value="UER00319"/>
</dbReference>
<dbReference type="UniPathway" id="UPA00668"/>
<dbReference type="GO" id="GO:0009507">
    <property type="term" value="C:chloroplast"/>
    <property type="evidence" value="ECO:0007669"/>
    <property type="project" value="UniProtKB-SubCell"/>
</dbReference>
<dbReference type="GO" id="GO:0004418">
    <property type="term" value="F:hydroxymethylbilane synthase activity"/>
    <property type="evidence" value="ECO:0007669"/>
    <property type="project" value="UniProtKB-EC"/>
</dbReference>
<dbReference type="GO" id="GO:0015995">
    <property type="term" value="P:chlorophyll biosynthetic process"/>
    <property type="evidence" value="ECO:0007669"/>
    <property type="project" value="UniProtKB-UniPathway"/>
</dbReference>
<dbReference type="GO" id="GO:0006782">
    <property type="term" value="P:protoporphyrinogen IX biosynthetic process"/>
    <property type="evidence" value="ECO:0007669"/>
    <property type="project" value="UniProtKB-UniPathway"/>
</dbReference>
<dbReference type="CDD" id="cd13648">
    <property type="entry name" value="PBP2_PBGD_1"/>
    <property type="match status" value="1"/>
</dbReference>
<dbReference type="FunFam" id="3.30.160.40:FF:000001">
    <property type="entry name" value="Porphobilinogen deaminase"/>
    <property type="match status" value="1"/>
</dbReference>
<dbReference type="FunFam" id="3.40.190.10:FF:000004">
    <property type="entry name" value="Porphobilinogen deaminase"/>
    <property type="match status" value="1"/>
</dbReference>
<dbReference type="FunFam" id="3.40.190.10:FF:000101">
    <property type="entry name" value="Porphobilinogen deaminase, chloroplastic"/>
    <property type="match status" value="1"/>
</dbReference>
<dbReference type="Gene3D" id="3.40.190.10">
    <property type="entry name" value="Periplasmic binding protein-like II"/>
    <property type="match status" value="2"/>
</dbReference>
<dbReference type="Gene3D" id="3.30.160.40">
    <property type="entry name" value="Porphobilinogen deaminase, C-terminal domain"/>
    <property type="match status" value="1"/>
</dbReference>
<dbReference type="HAMAP" id="MF_00260">
    <property type="entry name" value="Porphobil_deam"/>
    <property type="match status" value="1"/>
</dbReference>
<dbReference type="InterPro" id="IPR000860">
    <property type="entry name" value="HemC"/>
</dbReference>
<dbReference type="InterPro" id="IPR022419">
    <property type="entry name" value="Porphobilin_deaminase_cofac_BS"/>
</dbReference>
<dbReference type="InterPro" id="IPR022417">
    <property type="entry name" value="Porphobilin_deaminase_N"/>
</dbReference>
<dbReference type="InterPro" id="IPR022418">
    <property type="entry name" value="Porphobilinogen_deaminase_C"/>
</dbReference>
<dbReference type="InterPro" id="IPR036803">
    <property type="entry name" value="Porphobilinogen_deaminase_C_sf"/>
</dbReference>
<dbReference type="NCBIfam" id="TIGR00212">
    <property type="entry name" value="hemC"/>
    <property type="match status" value="1"/>
</dbReference>
<dbReference type="PANTHER" id="PTHR11557">
    <property type="entry name" value="PORPHOBILINOGEN DEAMINASE"/>
    <property type="match status" value="1"/>
</dbReference>
<dbReference type="PANTHER" id="PTHR11557:SF0">
    <property type="entry name" value="PORPHOBILINOGEN DEAMINASE"/>
    <property type="match status" value="1"/>
</dbReference>
<dbReference type="Pfam" id="PF01379">
    <property type="entry name" value="Porphobil_deam"/>
    <property type="match status" value="1"/>
</dbReference>
<dbReference type="Pfam" id="PF03900">
    <property type="entry name" value="Porphobil_deamC"/>
    <property type="match status" value="1"/>
</dbReference>
<dbReference type="PIRSF" id="PIRSF001438">
    <property type="entry name" value="4pyrrol_synth_OHMeBilane_synth"/>
    <property type="match status" value="1"/>
</dbReference>
<dbReference type="PRINTS" id="PR00151">
    <property type="entry name" value="PORPHBDMNASE"/>
</dbReference>
<dbReference type="SUPFAM" id="SSF53850">
    <property type="entry name" value="Periplasmic binding protein-like II"/>
    <property type="match status" value="1"/>
</dbReference>
<dbReference type="SUPFAM" id="SSF54782">
    <property type="entry name" value="Porphobilinogen deaminase (hydroxymethylbilane synthase), C-terminal domain"/>
    <property type="match status" value="1"/>
</dbReference>
<dbReference type="PROSITE" id="PS00533">
    <property type="entry name" value="PORPHOBILINOGEN_DEAM"/>
    <property type="match status" value="1"/>
</dbReference>
<evidence type="ECO:0000250" key="1"/>
<evidence type="ECO:0000305" key="2"/>
<protein>
    <recommendedName>
        <fullName>Porphobilinogen deaminase, chloroplastic</fullName>
        <shortName>PBG</shortName>
        <ecNumber>2.5.1.61</ecNumber>
    </recommendedName>
    <alternativeName>
        <fullName>Hydroxymethylbilane synthase</fullName>
        <shortName>HMBS</shortName>
    </alternativeName>
    <alternativeName>
        <fullName>Pre-uroporphyrinogen synthase</fullName>
    </alternativeName>
</protein>
<sequence>MEMTLYSSSSFSLPSAPSNPSLSLFTSSFRFSSFKTSPFSKCRIRASLAVEQQTQQNKTALIRIGTRGSPLALAQAHETRDKLMASHTELAEEGAIQIVIIKTTGDKILSQPLADIGGKGLFTKEIDEALINGDIDIAVHSMKDVPTYLPEETILPCNLPREDVRDAFISLSAASLADLPAGSVIGTASLRRKSQILHRYPSLTVQDNFRGNVQTRLRKLSEGVVKATLLALAGLKRLNMTENVTSTLSIDDMLPAVAQGAIGIACRSNDDKMAEYLASLNHEETRLAISCERAFLTTLDGSCRTPIAGYASRDKDGNCLFRGLVASPDGTRVLETSRIGSYTYEDMMKIGKDAGEELLSRAGPGFFNS</sequence>
<feature type="transit peptide" description="Chloroplast">
    <location>
        <begin position="1"/>
        <end position="46"/>
    </location>
</feature>
<feature type="chain" id="PRO_0000013323" description="Porphobilinogen deaminase, chloroplastic">
    <location>
        <begin position="47"/>
        <end position="369"/>
    </location>
</feature>
<feature type="modified residue" description="S-(dipyrrolylmethanemethyl)cysteine" evidence="1">
    <location>
        <position position="303"/>
    </location>
</feature>
<reference key="1">
    <citation type="journal article" date="1993" name="Plant Physiol.">
        <title>Structure and expression of chloroplast-localized porphobilinogen deaminase from pea (Pisum sativum L.) isolated by redundant polymerase chain reaction.</title>
        <authorList>
            <person name="Witty M."/>
            <person name="Wallace-Cook A.D.M."/>
            <person name="Albrecht H."/>
            <person name="Spano A.J."/>
            <person name="Michel H."/>
            <person name="Shabanowitz J."/>
            <person name="Hunt D.F."/>
            <person name="Timko M.P."/>
            <person name="Smith A.G."/>
        </authorList>
    </citation>
    <scope>NUCLEOTIDE SEQUENCE [MRNA]</scope>
    <scope>PARTIAL PROTEIN SEQUENCE</scope>
    <source>
        <strain>cv. Little Marvel</strain>
        <tissue>Leaf</tissue>
    </source>
</reference>
<proteinExistence type="evidence at protein level"/>
<organism>
    <name type="scientific">Pisum sativum</name>
    <name type="common">Garden pea</name>
    <name type="synonym">Lathyrus oleraceus</name>
    <dbReference type="NCBI Taxonomy" id="3888"/>
    <lineage>
        <taxon>Eukaryota</taxon>
        <taxon>Viridiplantae</taxon>
        <taxon>Streptophyta</taxon>
        <taxon>Embryophyta</taxon>
        <taxon>Tracheophyta</taxon>
        <taxon>Spermatophyta</taxon>
        <taxon>Magnoliopsida</taxon>
        <taxon>eudicotyledons</taxon>
        <taxon>Gunneridae</taxon>
        <taxon>Pentapetalae</taxon>
        <taxon>rosids</taxon>
        <taxon>fabids</taxon>
        <taxon>Fabales</taxon>
        <taxon>Fabaceae</taxon>
        <taxon>Papilionoideae</taxon>
        <taxon>50 kb inversion clade</taxon>
        <taxon>NPAAA clade</taxon>
        <taxon>Hologalegina</taxon>
        <taxon>IRL clade</taxon>
        <taxon>Fabeae</taxon>
        <taxon>Pisum</taxon>
    </lineage>
</organism>
<gene>
    <name type="primary">HEMC</name>
</gene>